<accession>Q048F6</accession>
<dbReference type="EC" id="6.1.1.11" evidence="1"/>
<dbReference type="EMBL" id="CP000412">
    <property type="protein sequence ID" value="ABJ59166.1"/>
    <property type="molecule type" value="Genomic_DNA"/>
</dbReference>
<dbReference type="RefSeq" id="WP_003622029.1">
    <property type="nucleotide sequence ID" value="NC_008529.1"/>
</dbReference>
<dbReference type="SMR" id="Q048F6"/>
<dbReference type="KEGG" id="lbu:LBUL_1748"/>
<dbReference type="HOGENOM" id="CLU_023797_1_1_9"/>
<dbReference type="BioCyc" id="LDEL321956:LBUL_RS08275-MONOMER"/>
<dbReference type="UniPathway" id="UPA00906">
    <property type="reaction ID" value="UER00895"/>
</dbReference>
<dbReference type="GO" id="GO:0005737">
    <property type="term" value="C:cytoplasm"/>
    <property type="evidence" value="ECO:0007669"/>
    <property type="project" value="UniProtKB-SubCell"/>
</dbReference>
<dbReference type="GO" id="GO:0005524">
    <property type="term" value="F:ATP binding"/>
    <property type="evidence" value="ECO:0007669"/>
    <property type="project" value="UniProtKB-UniRule"/>
</dbReference>
<dbReference type="GO" id="GO:0140096">
    <property type="term" value="F:catalytic activity, acting on a protein"/>
    <property type="evidence" value="ECO:0007669"/>
    <property type="project" value="UniProtKB-ARBA"/>
</dbReference>
<dbReference type="GO" id="GO:0004828">
    <property type="term" value="F:serine-tRNA ligase activity"/>
    <property type="evidence" value="ECO:0007669"/>
    <property type="project" value="UniProtKB-UniRule"/>
</dbReference>
<dbReference type="GO" id="GO:0016740">
    <property type="term" value="F:transferase activity"/>
    <property type="evidence" value="ECO:0007669"/>
    <property type="project" value="UniProtKB-ARBA"/>
</dbReference>
<dbReference type="GO" id="GO:0016260">
    <property type="term" value="P:selenocysteine biosynthetic process"/>
    <property type="evidence" value="ECO:0007669"/>
    <property type="project" value="UniProtKB-UniRule"/>
</dbReference>
<dbReference type="GO" id="GO:0006434">
    <property type="term" value="P:seryl-tRNA aminoacylation"/>
    <property type="evidence" value="ECO:0007669"/>
    <property type="project" value="UniProtKB-UniRule"/>
</dbReference>
<dbReference type="CDD" id="cd00770">
    <property type="entry name" value="SerRS_core"/>
    <property type="match status" value="1"/>
</dbReference>
<dbReference type="Gene3D" id="3.30.930.10">
    <property type="entry name" value="Bira Bifunctional Protein, Domain 2"/>
    <property type="match status" value="1"/>
</dbReference>
<dbReference type="Gene3D" id="1.10.287.40">
    <property type="entry name" value="Serine-tRNA synthetase, tRNA binding domain"/>
    <property type="match status" value="1"/>
</dbReference>
<dbReference type="HAMAP" id="MF_00176">
    <property type="entry name" value="Ser_tRNA_synth_type1"/>
    <property type="match status" value="1"/>
</dbReference>
<dbReference type="InterPro" id="IPR002314">
    <property type="entry name" value="aa-tRNA-synt_IIb"/>
</dbReference>
<dbReference type="InterPro" id="IPR006195">
    <property type="entry name" value="aa-tRNA-synth_II"/>
</dbReference>
<dbReference type="InterPro" id="IPR045864">
    <property type="entry name" value="aa-tRNA-synth_II/BPL/LPL"/>
</dbReference>
<dbReference type="InterPro" id="IPR002317">
    <property type="entry name" value="Ser-tRNA-ligase_type_1"/>
</dbReference>
<dbReference type="InterPro" id="IPR015866">
    <property type="entry name" value="Ser-tRNA-synth_1_N"/>
</dbReference>
<dbReference type="InterPro" id="IPR042103">
    <property type="entry name" value="SerRS_1_N_sf"/>
</dbReference>
<dbReference type="InterPro" id="IPR033729">
    <property type="entry name" value="SerRS_core"/>
</dbReference>
<dbReference type="InterPro" id="IPR010978">
    <property type="entry name" value="tRNA-bd_arm"/>
</dbReference>
<dbReference type="NCBIfam" id="TIGR00414">
    <property type="entry name" value="serS"/>
    <property type="match status" value="1"/>
</dbReference>
<dbReference type="PANTHER" id="PTHR43697:SF1">
    <property type="entry name" value="SERINE--TRNA LIGASE"/>
    <property type="match status" value="1"/>
</dbReference>
<dbReference type="PANTHER" id="PTHR43697">
    <property type="entry name" value="SERYL-TRNA SYNTHETASE"/>
    <property type="match status" value="1"/>
</dbReference>
<dbReference type="Pfam" id="PF02403">
    <property type="entry name" value="Seryl_tRNA_N"/>
    <property type="match status" value="1"/>
</dbReference>
<dbReference type="Pfam" id="PF00587">
    <property type="entry name" value="tRNA-synt_2b"/>
    <property type="match status" value="1"/>
</dbReference>
<dbReference type="PIRSF" id="PIRSF001529">
    <property type="entry name" value="Ser-tRNA-synth_IIa"/>
    <property type="match status" value="1"/>
</dbReference>
<dbReference type="PRINTS" id="PR00981">
    <property type="entry name" value="TRNASYNTHSER"/>
</dbReference>
<dbReference type="SUPFAM" id="SSF55681">
    <property type="entry name" value="Class II aaRS and biotin synthetases"/>
    <property type="match status" value="1"/>
</dbReference>
<dbReference type="SUPFAM" id="SSF46589">
    <property type="entry name" value="tRNA-binding arm"/>
    <property type="match status" value="1"/>
</dbReference>
<dbReference type="PROSITE" id="PS50862">
    <property type="entry name" value="AA_TRNA_LIGASE_II"/>
    <property type="match status" value="1"/>
</dbReference>
<reference key="1">
    <citation type="journal article" date="2006" name="Proc. Natl. Acad. Sci. U.S.A.">
        <title>Comparative genomics of the lactic acid bacteria.</title>
        <authorList>
            <person name="Makarova K.S."/>
            <person name="Slesarev A."/>
            <person name="Wolf Y.I."/>
            <person name="Sorokin A."/>
            <person name="Mirkin B."/>
            <person name="Koonin E.V."/>
            <person name="Pavlov A."/>
            <person name="Pavlova N."/>
            <person name="Karamychev V."/>
            <person name="Polouchine N."/>
            <person name="Shakhova V."/>
            <person name="Grigoriev I."/>
            <person name="Lou Y."/>
            <person name="Rohksar D."/>
            <person name="Lucas S."/>
            <person name="Huang K."/>
            <person name="Goodstein D.M."/>
            <person name="Hawkins T."/>
            <person name="Plengvidhya V."/>
            <person name="Welker D."/>
            <person name="Hughes J."/>
            <person name="Goh Y."/>
            <person name="Benson A."/>
            <person name="Baldwin K."/>
            <person name="Lee J.-H."/>
            <person name="Diaz-Muniz I."/>
            <person name="Dosti B."/>
            <person name="Smeianov V."/>
            <person name="Wechter W."/>
            <person name="Barabote R."/>
            <person name="Lorca G."/>
            <person name="Altermann E."/>
            <person name="Barrangou R."/>
            <person name="Ganesan B."/>
            <person name="Xie Y."/>
            <person name="Rawsthorne H."/>
            <person name="Tamir D."/>
            <person name="Parker C."/>
            <person name="Breidt F."/>
            <person name="Broadbent J.R."/>
            <person name="Hutkins R."/>
            <person name="O'Sullivan D."/>
            <person name="Steele J."/>
            <person name="Unlu G."/>
            <person name="Saier M.H. Jr."/>
            <person name="Klaenhammer T."/>
            <person name="Richardson P."/>
            <person name="Kozyavkin S."/>
            <person name="Weimer B.C."/>
            <person name="Mills D.A."/>
        </authorList>
    </citation>
    <scope>NUCLEOTIDE SEQUENCE [LARGE SCALE GENOMIC DNA]</scope>
    <source>
        <strain>ATCC BAA-365 / Lb-18</strain>
    </source>
</reference>
<keyword id="KW-0030">Aminoacyl-tRNA synthetase</keyword>
<keyword id="KW-0067">ATP-binding</keyword>
<keyword id="KW-0963">Cytoplasm</keyword>
<keyword id="KW-0436">Ligase</keyword>
<keyword id="KW-0547">Nucleotide-binding</keyword>
<keyword id="KW-0648">Protein biosynthesis</keyword>
<sequence length="435" mass="49262">MLDIKVIRENLDWAKEKLATRGIKPEQLDELVAIDAKRREAMVKCENLKAERNEVSKKIAAAKREKADASEAIANMREVGVKIKELDQEVDELQEKQEYILLRLPNFPADSDPIGPDESYNEEVRRWNEPTKFDYQPKAHWDLGTDLNILDWDAASKVSAARFVYYKGAGALLERAVYNFFLDENTSEGYTEVITPSLVNNDSMQGTGQFPKFTEDVYTIVDNDDPEVARNLTLIPTAEVPLVNYFRGDIIDGKNLPINVTALSPAFRSEAGSAGRDTRGLIRMHEFRKVEMVKVVKPEDSWKELENLTHNAEHLLQKLGLPYRVVALSTGDASFTSAKTYDLEVWMPAQDTYREISSCSNCTDFQARRAQIRYRDEDGKVKLTHTLNGSGLAVGRTVAAILENYQNEDGTVTVPEALRPYMHGMTKITPEVKWH</sequence>
<evidence type="ECO:0000255" key="1">
    <source>
        <dbReference type="HAMAP-Rule" id="MF_00176"/>
    </source>
</evidence>
<feature type="chain" id="PRO_1000019709" description="Serine--tRNA ligase">
    <location>
        <begin position="1"/>
        <end position="435"/>
    </location>
</feature>
<feature type="binding site" evidence="1">
    <location>
        <begin position="237"/>
        <end position="239"/>
    </location>
    <ligand>
        <name>L-serine</name>
        <dbReference type="ChEBI" id="CHEBI:33384"/>
    </ligand>
</feature>
<feature type="binding site" evidence="1">
    <location>
        <begin position="268"/>
        <end position="270"/>
    </location>
    <ligand>
        <name>ATP</name>
        <dbReference type="ChEBI" id="CHEBI:30616"/>
    </ligand>
</feature>
<feature type="binding site" evidence="1">
    <location>
        <position position="291"/>
    </location>
    <ligand>
        <name>L-serine</name>
        <dbReference type="ChEBI" id="CHEBI:33384"/>
    </ligand>
</feature>
<feature type="binding site" evidence="1">
    <location>
        <begin position="355"/>
        <end position="358"/>
    </location>
    <ligand>
        <name>ATP</name>
        <dbReference type="ChEBI" id="CHEBI:30616"/>
    </ligand>
</feature>
<feature type="binding site" evidence="1">
    <location>
        <position position="390"/>
    </location>
    <ligand>
        <name>L-serine</name>
        <dbReference type="ChEBI" id="CHEBI:33384"/>
    </ligand>
</feature>
<comment type="function">
    <text evidence="1">Catalyzes the attachment of serine to tRNA(Ser). Is also able to aminoacylate tRNA(Sec) with serine, to form the misacylated tRNA L-seryl-tRNA(Sec), which will be further converted into selenocysteinyl-tRNA(Sec).</text>
</comment>
<comment type="catalytic activity">
    <reaction evidence="1">
        <text>tRNA(Ser) + L-serine + ATP = L-seryl-tRNA(Ser) + AMP + diphosphate + H(+)</text>
        <dbReference type="Rhea" id="RHEA:12292"/>
        <dbReference type="Rhea" id="RHEA-COMP:9669"/>
        <dbReference type="Rhea" id="RHEA-COMP:9703"/>
        <dbReference type="ChEBI" id="CHEBI:15378"/>
        <dbReference type="ChEBI" id="CHEBI:30616"/>
        <dbReference type="ChEBI" id="CHEBI:33019"/>
        <dbReference type="ChEBI" id="CHEBI:33384"/>
        <dbReference type="ChEBI" id="CHEBI:78442"/>
        <dbReference type="ChEBI" id="CHEBI:78533"/>
        <dbReference type="ChEBI" id="CHEBI:456215"/>
        <dbReference type="EC" id="6.1.1.11"/>
    </reaction>
</comment>
<comment type="catalytic activity">
    <reaction evidence="1">
        <text>tRNA(Sec) + L-serine + ATP = L-seryl-tRNA(Sec) + AMP + diphosphate + H(+)</text>
        <dbReference type="Rhea" id="RHEA:42580"/>
        <dbReference type="Rhea" id="RHEA-COMP:9742"/>
        <dbReference type="Rhea" id="RHEA-COMP:10128"/>
        <dbReference type="ChEBI" id="CHEBI:15378"/>
        <dbReference type="ChEBI" id="CHEBI:30616"/>
        <dbReference type="ChEBI" id="CHEBI:33019"/>
        <dbReference type="ChEBI" id="CHEBI:33384"/>
        <dbReference type="ChEBI" id="CHEBI:78442"/>
        <dbReference type="ChEBI" id="CHEBI:78533"/>
        <dbReference type="ChEBI" id="CHEBI:456215"/>
        <dbReference type="EC" id="6.1.1.11"/>
    </reaction>
</comment>
<comment type="pathway">
    <text evidence="1">Aminoacyl-tRNA biosynthesis; selenocysteinyl-tRNA(Sec) biosynthesis; L-seryl-tRNA(Sec) from L-serine and tRNA(Sec): step 1/1.</text>
</comment>
<comment type="subunit">
    <text evidence="1">Homodimer. The tRNA molecule binds across the dimer.</text>
</comment>
<comment type="subcellular location">
    <subcellularLocation>
        <location evidence="1">Cytoplasm</location>
    </subcellularLocation>
</comment>
<comment type="domain">
    <text evidence="1">Consists of two distinct domains, a catalytic core and a N-terminal extension that is involved in tRNA binding.</text>
</comment>
<comment type="similarity">
    <text evidence="1">Belongs to the class-II aminoacyl-tRNA synthetase family. Type-1 seryl-tRNA synthetase subfamily.</text>
</comment>
<organism>
    <name type="scientific">Lactobacillus delbrueckii subsp. bulgaricus (strain ATCC BAA-365 / Lb-18)</name>
    <dbReference type="NCBI Taxonomy" id="321956"/>
    <lineage>
        <taxon>Bacteria</taxon>
        <taxon>Bacillati</taxon>
        <taxon>Bacillota</taxon>
        <taxon>Bacilli</taxon>
        <taxon>Lactobacillales</taxon>
        <taxon>Lactobacillaceae</taxon>
        <taxon>Lactobacillus</taxon>
    </lineage>
</organism>
<proteinExistence type="inferred from homology"/>
<protein>
    <recommendedName>
        <fullName evidence="1">Serine--tRNA ligase</fullName>
        <ecNumber evidence="1">6.1.1.11</ecNumber>
    </recommendedName>
    <alternativeName>
        <fullName evidence="1">Seryl-tRNA synthetase</fullName>
        <shortName evidence="1">SerRS</shortName>
    </alternativeName>
    <alternativeName>
        <fullName evidence="1">Seryl-tRNA(Ser/Sec) synthetase</fullName>
    </alternativeName>
</protein>
<name>SYS_LACDB</name>
<gene>
    <name evidence="1" type="primary">serS</name>
    <name type="ordered locus">LBUL_1748</name>
</gene>